<dbReference type="EMBL" id="AY560885">
    <property type="protein sequence ID" value="AAT44952.1"/>
    <property type="molecule type" value="mRNA"/>
</dbReference>
<dbReference type="EMBL" id="AL163912">
    <property type="protein sequence ID" value="CAB87920.1"/>
    <property type="molecule type" value="Genomic_DNA"/>
</dbReference>
<dbReference type="EMBL" id="CP002688">
    <property type="protein sequence ID" value="AED91135.1"/>
    <property type="molecule type" value="Genomic_DNA"/>
</dbReference>
<dbReference type="EMBL" id="DQ653268">
    <property type="protein sequence ID" value="ABK28684.1"/>
    <property type="status" value="ALT_SEQ"/>
    <property type="molecule type" value="mRNA"/>
</dbReference>
<dbReference type="EMBL" id="BT025717">
    <property type="protein sequence ID" value="ABF82620.1"/>
    <property type="molecule type" value="mRNA"/>
</dbReference>
<dbReference type="EMBL" id="AB493741">
    <property type="protein sequence ID" value="BAH30579.1"/>
    <property type="molecule type" value="mRNA"/>
</dbReference>
<dbReference type="PIR" id="T49870">
    <property type="entry name" value="T49870"/>
</dbReference>
<dbReference type="RefSeq" id="NP_196348.1">
    <property type="nucleotide sequence ID" value="NM_120813.2"/>
</dbReference>
<dbReference type="SMR" id="Q9LY29"/>
<dbReference type="BioGRID" id="15901">
    <property type="interactions" value="9"/>
</dbReference>
<dbReference type="FunCoup" id="Q9LY29">
    <property type="interactions" value="68"/>
</dbReference>
<dbReference type="IntAct" id="Q9LY29">
    <property type="interactions" value="11"/>
</dbReference>
<dbReference type="STRING" id="3702.Q9LY29"/>
<dbReference type="PaxDb" id="3702-AT5G07310.1"/>
<dbReference type="EnsemblPlants" id="AT5G07310.1">
    <property type="protein sequence ID" value="AT5G07310.1"/>
    <property type="gene ID" value="AT5G07310"/>
</dbReference>
<dbReference type="GeneID" id="830622"/>
<dbReference type="Gramene" id="AT5G07310.1">
    <property type="protein sequence ID" value="AT5G07310.1"/>
    <property type="gene ID" value="AT5G07310"/>
</dbReference>
<dbReference type="KEGG" id="ath:AT5G07310"/>
<dbReference type="Araport" id="AT5G07310"/>
<dbReference type="TAIR" id="AT5G07310">
    <property type="gene designation" value="ERF115"/>
</dbReference>
<dbReference type="eggNOG" id="ENOG502RZR5">
    <property type="taxonomic scope" value="Eukaryota"/>
</dbReference>
<dbReference type="HOGENOM" id="CLU_042594_0_2_1"/>
<dbReference type="InParanoid" id="Q9LY29"/>
<dbReference type="OMA" id="ARSQYDM"/>
<dbReference type="PhylomeDB" id="Q9LY29"/>
<dbReference type="PRO" id="PR:Q9LY29"/>
<dbReference type="Proteomes" id="UP000006548">
    <property type="component" value="Chromosome 5"/>
</dbReference>
<dbReference type="ExpressionAtlas" id="Q9LY29">
    <property type="expression patterns" value="baseline and differential"/>
</dbReference>
<dbReference type="GO" id="GO:0005634">
    <property type="term" value="C:nucleus"/>
    <property type="evidence" value="ECO:0007669"/>
    <property type="project" value="UniProtKB-SubCell"/>
</dbReference>
<dbReference type="GO" id="GO:0003677">
    <property type="term" value="F:DNA binding"/>
    <property type="evidence" value="ECO:0007669"/>
    <property type="project" value="UniProtKB-KW"/>
</dbReference>
<dbReference type="GO" id="GO:0003700">
    <property type="term" value="F:DNA-binding transcription factor activity"/>
    <property type="evidence" value="ECO:0000250"/>
    <property type="project" value="TAIR"/>
</dbReference>
<dbReference type="GO" id="GO:1990110">
    <property type="term" value="P:callus formation"/>
    <property type="evidence" value="ECO:0000316"/>
    <property type="project" value="TAIR"/>
</dbReference>
<dbReference type="GO" id="GO:0009873">
    <property type="term" value="P:ethylene-activated signaling pathway"/>
    <property type="evidence" value="ECO:0007669"/>
    <property type="project" value="UniProtKB-KW"/>
</dbReference>
<dbReference type="GO" id="GO:0009416">
    <property type="term" value="P:response to light stimulus"/>
    <property type="evidence" value="ECO:0000270"/>
    <property type="project" value="TAIR"/>
</dbReference>
<dbReference type="CDD" id="cd00018">
    <property type="entry name" value="AP2"/>
    <property type="match status" value="1"/>
</dbReference>
<dbReference type="FunFam" id="3.30.730.10:FF:000001">
    <property type="entry name" value="Ethylene-responsive transcription factor 2"/>
    <property type="match status" value="1"/>
</dbReference>
<dbReference type="Gene3D" id="3.30.730.10">
    <property type="entry name" value="AP2/ERF domain"/>
    <property type="match status" value="1"/>
</dbReference>
<dbReference type="InterPro" id="IPR001471">
    <property type="entry name" value="AP2/ERF_dom"/>
</dbReference>
<dbReference type="InterPro" id="IPR036955">
    <property type="entry name" value="AP2/ERF_dom_sf"/>
</dbReference>
<dbReference type="InterPro" id="IPR016177">
    <property type="entry name" value="DNA-bd_dom_sf"/>
</dbReference>
<dbReference type="InterPro" id="IPR044808">
    <property type="entry name" value="ERF_plant"/>
</dbReference>
<dbReference type="PANTHER" id="PTHR31190">
    <property type="entry name" value="DNA-BINDING DOMAIN"/>
    <property type="match status" value="1"/>
</dbReference>
<dbReference type="PANTHER" id="PTHR31190:SF489">
    <property type="entry name" value="ETHYLENE-RESPONSIVE TRANSCRIPTION FACTOR ERF113-RELATED"/>
    <property type="match status" value="1"/>
</dbReference>
<dbReference type="Pfam" id="PF00847">
    <property type="entry name" value="AP2"/>
    <property type="match status" value="1"/>
</dbReference>
<dbReference type="PRINTS" id="PR00367">
    <property type="entry name" value="ETHRSPELEMNT"/>
</dbReference>
<dbReference type="SMART" id="SM00380">
    <property type="entry name" value="AP2"/>
    <property type="match status" value="1"/>
</dbReference>
<dbReference type="SUPFAM" id="SSF54171">
    <property type="entry name" value="DNA-binding domain"/>
    <property type="match status" value="1"/>
</dbReference>
<dbReference type="PROSITE" id="PS51032">
    <property type="entry name" value="AP2_ERF"/>
    <property type="match status" value="1"/>
</dbReference>
<reference key="1">
    <citation type="submission" date="2004-02" db="EMBL/GenBank/DDBJ databases">
        <title>Molecular cloning, expression, phylogenetic and functional characterization of the Arabidopsis AP2/EREBP transcription factor family.</title>
        <authorList>
            <person name="Pan Y."/>
            <person name="Gong W."/>
            <person name="Liu D."/>
            <person name="Fu Q."/>
            <person name="Mei W.-Q."/>
            <person name="Song W.-Q."/>
            <person name="Ma L.-G."/>
            <person name="Luo J.-C."/>
            <person name="Deng X.-W."/>
            <person name="Zhu Y.-X."/>
        </authorList>
    </citation>
    <scope>NUCLEOTIDE SEQUENCE [MRNA]</scope>
</reference>
<reference key="2">
    <citation type="journal article" date="2000" name="Nature">
        <title>Sequence and analysis of chromosome 5 of the plant Arabidopsis thaliana.</title>
        <authorList>
            <person name="Tabata S."/>
            <person name="Kaneko T."/>
            <person name="Nakamura Y."/>
            <person name="Kotani H."/>
            <person name="Kato T."/>
            <person name="Asamizu E."/>
            <person name="Miyajima N."/>
            <person name="Sasamoto S."/>
            <person name="Kimura T."/>
            <person name="Hosouchi T."/>
            <person name="Kawashima K."/>
            <person name="Kohara M."/>
            <person name="Matsumoto M."/>
            <person name="Matsuno A."/>
            <person name="Muraki A."/>
            <person name="Nakayama S."/>
            <person name="Nakazaki N."/>
            <person name="Naruo K."/>
            <person name="Okumura S."/>
            <person name="Shinpo S."/>
            <person name="Takeuchi C."/>
            <person name="Wada T."/>
            <person name="Watanabe A."/>
            <person name="Yamada M."/>
            <person name="Yasuda M."/>
            <person name="Sato S."/>
            <person name="de la Bastide M."/>
            <person name="Huang E."/>
            <person name="Spiegel L."/>
            <person name="Gnoj L."/>
            <person name="O'Shaughnessy A."/>
            <person name="Preston R."/>
            <person name="Habermann K."/>
            <person name="Murray J."/>
            <person name="Johnson D."/>
            <person name="Rohlfing T."/>
            <person name="Nelson J."/>
            <person name="Stoneking T."/>
            <person name="Pepin K."/>
            <person name="Spieth J."/>
            <person name="Sekhon M."/>
            <person name="Armstrong J."/>
            <person name="Becker M."/>
            <person name="Belter E."/>
            <person name="Cordum H."/>
            <person name="Cordes M."/>
            <person name="Courtney L."/>
            <person name="Courtney W."/>
            <person name="Dante M."/>
            <person name="Du H."/>
            <person name="Edwards J."/>
            <person name="Fryman J."/>
            <person name="Haakensen B."/>
            <person name="Lamar E."/>
            <person name="Latreille P."/>
            <person name="Leonard S."/>
            <person name="Meyer R."/>
            <person name="Mulvaney E."/>
            <person name="Ozersky P."/>
            <person name="Riley A."/>
            <person name="Strowmatt C."/>
            <person name="Wagner-McPherson C."/>
            <person name="Wollam A."/>
            <person name="Yoakum M."/>
            <person name="Bell M."/>
            <person name="Dedhia N."/>
            <person name="Parnell L."/>
            <person name="Shah R."/>
            <person name="Rodriguez M."/>
            <person name="Hoon See L."/>
            <person name="Vil D."/>
            <person name="Baker J."/>
            <person name="Kirchoff K."/>
            <person name="Toth K."/>
            <person name="King L."/>
            <person name="Bahret A."/>
            <person name="Miller B."/>
            <person name="Marra M.A."/>
            <person name="Martienssen R."/>
            <person name="McCombie W.R."/>
            <person name="Wilson R.K."/>
            <person name="Murphy G."/>
            <person name="Bancroft I."/>
            <person name="Volckaert G."/>
            <person name="Wambutt R."/>
            <person name="Duesterhoeft A."/>
            <person name="Stiekema W."/>
            <person name="Pohl T."/>
            <person name="Entian K.-D."/>
            <person name="Terryn N."/>
            <person name="Hartley N."/>
            <person name="Bent E."/>
            <person name="Johnson S."/>
            <person name="Langham S.-A."/>
            <person name="McCullagh B."/>
            <person name="Robben J."/>
            <person name="Grymonprez B."/>
            <person name="Zimmermann W."/>
            <person name="Ramsperger U."/>
            <person name="Wedler H."/>
            <person name="Balke K."/>
            <person name="Wedler E."/>
            <person name="Peters S."/>
            <person name="van Staveren M."/>
            <person name="Dirkse W."/>
            <person name="Mooijman P."/>
            <person name="Klein Lankhorst R."/>
            <person name="Weitzenegger T."/>
            <person name="Bothe G."/>
            <person name="Rose M."/>
            <person name="Hauf J."/>
            <person name="Berneiser S."/>
            <person name="Hempel S."/>
            <person name="Feldpausch M."/>
            <person name="Lamberth S."/>
            <person name="Villarroel R."/>
            <person name="Gielen J."/>
            <person name="Ardiles W."/>
            <person name="Bents O."/>
            <person name="Lemcke K."/>
            <person name="Kolesov G."/>
            <person name="Mayer K.F.X."/>
            <person name="Rudd S."/>
            <person name="Schoof H."/>
            <person name="Schueller C."/>
            <person name="Zaccaria P."/>
            <person name="Mewes H.-W."/>
            <person name="Bevan M."/>
            <person name="Fransz P.F."/>
        </authorList>
    </citation>
    <scope>NUCLEOTIDE SEQUENCE [LARGE SCALE GENOMIC DNA]</scope>
    <source>
        <strain>cv. Columbia</strain>
    </source>
</reference>
<reference key="3">
    <citation type="journal article" date="2017" name="Plant J.">
        <title>Araport11: a complete reannotation of the Arabidopsis thaliana reference genome.</title>
        <authorList>
            <person name="Cheng C.Y."/>
            <person name="Krishnakumar V."/>
            <person name="Chan A.P."/>
            <person name="Thibaud-Nissen F."/>
            <person name="Schobel S."/>
            <person name="Town C.D."/>
        </authorList>
    </citation>
    <scope>GENOME REANNOTATION</scope>
    <source>
        <strain>cv. Columbia</strain>
    </source>
</reference>
<reference key="4">
    <citation type="journal article" date="2006" name="Plant Biotechnol. J.">
        <title>Simultaneous high-throughput recombinational cloning of open reading frames in closed and open configurations.</title>
        <authorList>
            <person name="Underwood B.A."/>
            <person name="Vanderhaeghen R."/>
            <person name="Whitford R."/>
            <person name="Town C.D."/>
            <person name="Hilson P."/>
        </authorList>
    </citation>
    <scope>NUCLEOTIDE SEQUENCE [LARGE SCALE MRNA]</scope>
    <source>
        <strain>cv. Columbia</strain>
    </source>
</reference>
<reference key="5">
    <citation type="submission" date="2006-06" db="EMBL/GenBank/DDBJ databases">
        <title>Arabidopsis ORF clone.</title>
        <authorList>
            <person name="Quinitio C."/>
            <person name="Chen H."/>
            <person name="Kim C.J."/>
            <person name="Shinn P."/>
            <person name="Ecker J.R."/>
        </authorList>
    </citation>
    <scope>NUCLEOTIDE SEQUENCE [LARGE SCALE MRNA]</scope>
    <source>
        <strain>cv. Columbia</strain>
    </source>
</reference>
<reference key="6">
    <citation type="submission" date="2009-03" db="EMBL/GenBank/DDBJ databases">
        <title>ORF cloning and analysis of Arabidopsis transcription factor genes.</title>
        <authorList>
            <person name="Fujita M."/>
            <person name="Mizukado S."/>
            <person name="Seki M."/>
            <person name="Shinozaki K."/>
            <person name="Mitsuda N."/>
            <person name="Takiguchi Y."/>
            <person name="Takagi M."/>
        </authorList>
    </citation>
    <scope>NUCLEOTIDE SEQUENCE [LARGE SCALE MRNA]</scope>
</reference>
<reference key="7">
    <citation type="journal article" date="2006" name="Plant Physiol.">
        <title>Genome-wide analysis of the ERF gene family in Arabidopsis and rice.</title>
        <authorList>
            <person name="Nakano T."/>
            <person name="Suzuki K."/>
            <person name="Fujimura T."/>
            <person name="Shinshi H."/>
        </authorList>
    </citation>
    <scope>GENE FAMILY</scope>
    <scope>NOMENCLATURE</scope>
</reference>
<reference key="8">
    <citation type="journal article" date="2013" name="Science">
        <title>ERF115 controls root quiescent center cell division and stem cell replenishment.</title>
        <authorList>
            <person name="Heyman J."/>
            <person name="Cools T."/>
            <person name="Vandenbussche F."/>
            <person name="Heyndrickx K.S."/>
            <person name="Van Leene J."/>
            <person name="Vercauteren I."/>
            <person name="Vanderauwera S."/>
            <person name="Vandepoele K."/>
            <person name="De Jaeger G."/>
            <person name="Van Der Straeten D."/>
            <person name="De Veylder L."/>
        </authorList>
    </citation>
    <scope>FUNCTION</scope>
    <scope>MUTAGENESIS OF 115-ARG--LEU-118 AND 150-ARG--LEU-153</scope>
    <scope>TISSUE SPECIFICITY</scope>
    <scope>INDUCTION BY ETHYLENE AND BRASSINOSTEROID</scope>
    <scope>PROTEOLYTIC CLEAVAGE</scope>
</reference>
<organism>
    <name type="scientific">Arabidopsis thaliana</name>
    <name type="common">Mouse-ear cress</name>
    <dbReference type="NCBI Taxonomy" id="3702"/>
    <lineage>
        <taxon>Eukaryota</taxon>
        <taxon>Viridiplantae</taxon>
        <taxon>Streptophyta</taxon>
        <taxon>Embryophyta</taxon>
        <taxon>Tracheophyta</taxon>
        <taxon>Spermatophyta</taxon>
        <taxon>Magnoliopsida</taxon>
        <taxon>eudicotyledons</taxon>
        <taxon>Gunneridae</taxon>
        <taxon>Pentapetalae</taxon>
        <taxon>rosids</taxon>
        <taxon>malvids</taxon>
        <taxon>Brassicales</taxon>
        <taxon>Brassicaceae</taxon>
        <taxon>Camelineae</taxon>
        <taxon>Arabidopsis</taxon>
    </lineage>
</organism>
<protein>
    <recommendedName>
        <fullName>Ethylene-responsive transcription factor ERF115</fullName>
    </recommendedName>
</protein>
<sequence>MANSGNYGKRPFRGDESDEKKEADDDENIFPFFSARSQYDMRAMVSALTQVIGNQSSSHDNNQHQPVVYNQQDPNPPAPPTQDQGLLRKRHYRGVRQRPWGKWAAEIRDPQKAARVWLGTFETAEAAALAYDNAALKFKGSKAKLNFPERAQLASNTSTTTGPPNYYSSNNQIYYSNPQTNPQTIPYFNQYYYNQYLHQGGNSNDALSYSLAGGETGGSMYNHQTLSTTNSSSSGGSSRQQDDEQDYARYLRFGDSSPPNSGF</sequence>
<proteinExistence type="evidence at protein level"/>
<name>EF115_ARATH</name>
<accession>Q9LY29</accession>
<accession>A0MFE2</accession>
<accession>C0SVN8</accession>
<feature type="chain" id="PRO_0000290426" description="Ethylene-responsive transcription factor ERF115">
    <location>
        <begin position="1"/>
        <end position="263"/>
    </location>
</feature>
<feature type="DNA-binding region" description="AP2/ERF" evidence="2">
    <location>
        <begin position="91"/>
        <end position="148"/>
    </location>
</feature>
<feature type="region of interest" description="Disordered" evidence="3">
    <location>
        <begin position="1"/>
        <end position="29"/>
    </location>
</feature>
<feature type="region of interest" description="Disordered" evidence="3">
    <location>
        <begin position="54"/>
        <end position="88"/>
    </location>
</feature>
<feature type="region of interest" description="Disordered" evidence="3">
    <location>
        <begin position="220"/>
        <end position="263"/>
    </location>
</feature>
<feature type="short sequence motif" description="Destruction-box D1" evidence="1">
    <location>
        <begin position="115"/>
        <end position="118"/>
    </location>
</feature>
<feature type="short sequence motif" description="Destruction-box D2" evidence="1">
    <location>
        <begin position="150"/>
        <end position="153"/>
    </location>
</feature>
<feature type="compositionally biased region" description="Basic and acidic residues" evidence="3">
    <location>
        <begin position="12"/>
        <end position="23"/>
    </location>
</feature>
<feature type="compositionally biased region" description="Polar residues" evidence="3">
    <location>
        <begin position="54"/>
        <end position="73"/>
    </location>
</feature>
<feature type="compositionally biased region" description="Low complexity" evidence="3">
    <location>
        <begin position="227"/>
        <end position="238"/>
    </location>
</feature>
<feature type="compositionally biased region" description="Basic and acidic residues" evidence="3">
    <location>
        <begin position="240"/>
        <end position="249"/>
    </location>
</feature>
<feature type="mutagenesis site" description="Increased stability of the protein. Further increase of the stability of the protein; when associated with 150-AAQA-153." evidence="4">
    <original>RVWL</original>
    <variation>AVWA</variation>
    <location>
        <begin position="115"/>
        <end position="118"/>
    </location>
</feature>
<feature type="mutagenesis site" description="No effect on the stability of the protein. Increased stability of the protein; when associated with 115-AVWA-118." evidence="4">
    <original>RAQL</original>
    <variation>AAQA</variation>
    <location>
        <begin position="150"/>
        <end position="153"/>
    </location>
</feature>
<comment type="function">
    <text evidence="4">Acts as a transcriptional activator of the phytosulfokine PSK5 peptide hormone. Binds to the GCC-box pathogenesis-related promoter element. Rate-limiting factor of quiescent center cell division active when surrounding stem cells are damaged. Is a proteolytic target of APC/C-FZR1 complex.</text>
</comment>
<comment type="interaction">
    <interactant intactId="EBI-2130977">
        <id>Q9LY29</id>
    </interactant>
    <interactant intactId="EBI-25514815">
        <id>Q9LDL7</id>
        <label>PAT1</label>
    </interactant>
    <organismsDiffer>false</organismsDiffer>
    <experiments>3</experiments>
</comment>
<comment type="interaction">
    <interactant intactId="EBI-2130977">
        <id>Q9LY29</id>
    </interactant>
    <interactant intactId="EBI-1238472">
        <id>Q9S7H5</id>
        <label>SCL21</label>
    </interactant>
    <organismsDiffer>false</organismsDiffer>
    <experiments>3</experiments>
</comment>
<comment type="subcellular location">
    <subcellularLocation>
        <location evidence="5">Nucleus</location>
    </subcellularLocation>
</comment>
<comment type="tissue specificity">
    <text evidence="4">Restricted to dividing quiescent center cells.</text>
</comment>
<comment type="induction">
    <text evidence="4">Up-regulated by brassinosteroid, but not regulated by ethylene.</text>
</comment>
<comment type="PTM">
    <text>Cleaved by the APC/C-FZR1 complex.</text>
</comment>
<comment type="similarity">
    <text evidence="5">Belongs to the AP2/ERF transcription factor family. ERF subfamily.</text>
</comment>
<comment type="sequence caution" evidence="5">
    <conflict type="erroneous termination">
        <sequence resource="EMBL-CDS" id="ABK28684"/>
    </conflict>
    <text>Extended C-terminus.</text>
</comment>
<keyword id="KW-0010">Activator</keyword>
<keyword id="KW-0238">DNA-binding</keyword>
<keyword id="KW-0936">Ethylene signaling pathway</keyword>
<keyword id="KW-0539">Nucleus</keyword>
<keyword id="KW-1185">Reference proteome</keyword>
<keyword id="KW-0804">Transcription</keyword>
<keyword id="KW-0805">Transcription regulation</keyword>
<evidence type="ECO:0000255" key="1"/>
<evidence type="ECO:0000255" key="2">
    <source>
        <dbReference type="PROSITE-ProRule" id="PRU00366"/>
    </source>
</evidence>
<evidence type="ECO:0000256" key="3">
    <source>
        <dbReference type="SAM" id="MobiDB-lite"/>
    </source>
</evidence>
<evidence type="ECO:0000269" key="4">
    <source>
    </source>
</evidence>
<evidence type="ECO:0000305" key="5"/>
<gene>
    <name type="primary">ERF115</name>
    <name type="ordered locus">At5g07310</name>
    <name type="ORF">T2I1.20</name>
</gene>